<comment type="function">
    <text evidence="1 5 8">FAD-dependent monooxygenase; part of the benzoic acid degradation pathway also known as the protocatechuic acid pathway (PubMed:25479309). Benzoic acid debradation begins with the conversion of benzoic acid into 4-hydroxybenzoic acid through hydroxylation by the benzoate-4-monooxygenase bphA, and its partner NADPH-cytochrome P450 reductase cprA which act as a mediator in electron donation from NADPH (By similarity). 4-Hydroxybenzoic acid is then converted into 3,4-dihydroxybenzoic acid (also called protocatechuic acid) by the p-hydroxybenzoate-m-hydroxylase phhA (Probable). Protocatechuic acid is converted into 3-carboxy-cis,cis-muconic acid by the intradiol ring-cleavage dioxygenase prcA, which is further metabolized through the 3-oxoadipate pathway to finally enter the tricarboxylic acid cycle (TCA) (Probable).</text>
</comment>
<comment type="catalytic activity">
    <reaction evidence="8">
        <text>4-hydroxybenzoate + NADH + O2 + H(+) = 3,4-dihydroxybenzoate + NAD(+) + H2O</text>
        <dbReference type="Rhea" id="RHEA:19473"/>
        <dbReference type="ChEBI" id="CHEBI:15377"/>
        <dbReference type="ChEBI" id="CHEBI:15378"/>
        <dbReference type="ChEBI" id="CHEBI:15379"/>
        <dbReference type="ChEBI" id="CHEBI:17879"/>
        <dbReference type="ChEBI" id="CHEBI:36241"/>
        <dbReference type="ChEBI" id="CHEBI:57540"/>
        <dbReference type="ChEBI" id="CHEBI:57945"/>
        <dbReference type="EC" id="1.14.13.33"/>
    </reaction>
    <physiologicalReaction direction="left-to-right" evidence="8">
        <dbReference type="Rhea" id="RHEA:19474"/>
    </physiologicalReaction>
</comment>
<comment type="catalytic activity">
    <reaction evidence="8">
        <text>4-hydroxybenzoate + NADPH + O2 + H(+) = 3,4-dihydroxybenzoate + NADP(+) + H2O</text>
        <dbReference type="Rhea" id="RHEA:19477"/>
        <dbReference type="ChEBI" id="CHEBI:15377"/>
        <dbReference type="ChEBI" id="CHEBI:15378"/>
        <dbReference type="ChEBI" id="CHEBI:15379"/>
        <dbReference type="ChEBI" id="CHEBI:17879"/>
        <dbReference type="ChEBI" id="CHEBI:36241"/>
        <dbReference type="ChEBI" id="CHEBI:57783"/>
        <dbReference type="ChEBI" id="CHEBI:58349"/>
        <dbReference type="EC" id="1.14.13.33"/>
    </reaction>
    <physiologicalReaction direction="left-to-right" evidence="8">
        <dbReference type="Rhea" id="RHEA:19478"/>
    </physiologicalReaction>
</comment>
<comment type="cofactor">
    <cofactor evidence="2">
        <name>FAD</name>
        <dbReference type="ChEBI" id="CHEBI:57692"/>
    </cofactor>
    <text evidence="2">Binds 1 FAD per subunit.</text>
</comment>
<comment type="subcellular location">
    <subcellularLocation>
        <location evidence="3">Membrane</location>
        <topology evidence="3">Single-pass membrane protein</topology>
    </subcellularLocation>
</comment>
<comment type="induction">
    <text evidence="5">Expression is largely up-regulated in the presence of benzoate.</text>
</comment>
<comment type="similarity">
    <text evidence="7">Belongs to the PheA/TfdB FAD monooxygenase family.</text>
</comment>
<name>PHHA_EMENI</name>
<keyword id="KW-0274">FAD</keyword>
<keyword id="KW-0285">Flavoprotein</keyword>
<keyword id="KW-0325">Glycoprotein</keyword>
<keyword id="KW-0472">Membrane</keyword>
<keyword id="KW-0503">Monooxygenase</keyword>
<keyword id="KW-0560">Oxidoreductase</keyword>
<keyword id="KW-1185">Reference proteome</keyword>
<keyword id="KW-0812">Transmembrane</keyword>
<keyword id="KW-1133">Transmembrane helix</keyword>
<reference key="1">
    <citation type="journal article" date="2005" name="Nature">
        <title>Sequencing of Aspergillus nidulans and comparative analysis with A. fumigatus and A. oryzae.</title>
        <authorList>
            <person name="Galagan J.E."/>
            <person name="Calvo S.E."/>
            <person name="Cuomo C."/>
            <person name="Ma L.-J."/>
            <person name="Wortman J.R."/>
            <person name="Batzoglou S."/>
            <person name="Lee S.-I."/>
            <person name="Bastuerkmen M."/>
            <person name="Spevak C.C."/>
            <person name="Clutterbuck J."/>
            <person name="Kapitonov V."/>
            <person name="Jurka J."/>
            <person name="Scazzocchio C."/>
            <person name="Farman M.L."/>
            <person name="Butler J."/>
            <person name="Purcell S."/>
            <person name="Harris S."/>
            <person name="Braus G.H."/>
            <person name="Draht O."/>
            <person name="Busch S."/>
            <person name="D'Enfert C."/>
            <person name="Bouchier C."/>
            <person name="Goldman G.H."/>
            <person name="Bell-Pedersen D."/>
            <person name="Griffiths-Jones S."/>
            <person name="Doonan J.H."/>
            <person name="Yu J."/>
            <person name="Vienken K."/>
            <person name="Pain A."/>
            <person name="Freitag M."/>
            <person name="Selker E.U."/>
            <person name="Archer D.B."/>
            <person name="Penalva M.A."/>
            <person name="Oakley B.R."/>
            <person name="Momany M."/>
            <person name="Tanaka T."/>
            <person name="Kumagai T."/>
            <person name="Asai K."/>
            <person name="Machida M."/>
            <person name="Nierman W.C."/>
            <person name="Denning D.W."/>
            <person name="Caddick M.X."/>
            <person name="Hynes M."/>
            <person name="Paoletti M."/>
            <person name="Fischer R."/>
            <person name="Miller B.L."/>
            <person name="Dyer P.S."/>
            <person name="Sachs M.S."/>
            <person name="Osmani S.A."/>
            <person name="Birren B.W."/>
        </authorList>
    </citation>
    <scope>NUCLEOTIDE SEQUENCE [LARGE SCALE GENOMIC DNA]</scope>
    <source>
        <strain>FGSC A4 / ATCC 38163 / CBS 112.46 / NRRL 194 / M139</strain>
    </source>
</reference>
<reference key="2">
    <citation type="journal article" date="2009" name="Fungal Genet. Biol.">
        <title>The 2008 update of the Aspergillus nidulans genome annotation: a community effort.</title>
        <authorList>
            <person name="Wortman J.R."/>
            <person name="Gilsenan J.M."/>
            <person name="Joardar V."/>
            <person name="Deegan J."/>
            <person name="Clutterbuck J."/>
            <person name="Andersen M.R."/>
            <person name="Archer D."/>
            <person name="Bencina M."/>
            <person name="Braus G."/>
            <person name="Coutinho P."/>
            <person name="von Dohren H."/>
            <person name="Doonan J."/>
            <person name="Driessen A.J."/>
            <person name="Durek P."/>
            <person name="Espeso E."/>
            <person name="Fekete E."/>
            <person name="Flipphi M."/>
            <person name="Estrada C.G."/>
            <person name="Geysens S."/>
            <person name="Goldman G."/>
            <person name="de Groot P.W."/>
            <person name="Hansen K."/>
            <person name="Harris S.D."/>
            <person name="Heinekamp T."/>
            <person name="Helmstaedt K."/>
            <person name="Henrissat B."/>
            <person name="Hofmann G."/>
            <person name="Homan T."/>
            <person name="Horio T."/>
            <person name="Horiuchi H."/>
            <person name="James S."/>
            <person name="Jones M."/>
            <person name="Karaffa L."/>
            <person name="Karanyi Z."/>
            <person name="Kato M."/>
            <person name="Keller N."/>
            <person name="Kelly D.E."/>
            <person name="Kiel J.A."/>
            <person name="Kim J.M."/>
            <person name="van der Klei I.J."/>
            <person name="Klis F.M."/>
            <person name="Kovalchuk A."/>
            <person name="Krasevec N."/>
            <person name="Kubicek C.P."/>
            <person name="Liu B."/>
            <person name="Maccabe A."/>
            <person name="Meyer V."/>
            <person name="Mirabito P."/>
            <person name="Miskei M."/>
            <person name="Mos M."/>
            <person name="Mullins J."/>
            <person name="Nelson D.R."/>
            <person name="Nielsen J."/>
            <person name="Oakley B.R."/>
            <person name="Osmani S.A."/>
            <person name="Pakula T."/>
            <person name="Paszewski A."/>
            <person name="Paulsen I."/>
            <person name="Pilsyk S."/>
            <person name="Pocsi I."/>
            <person name="Punt P.J."/>
            <person name="Ram A.F."/>
            <person name="Ren Q."/>
            <person name="Robellet X."/>
            <person name="Robson G."/>
            <person name="Seiboth B."/>
            <person name="van Solingen P."/>
            <person name="Specht T."/>
            <person name="Sun J."/>
            <person name="Taheri-Talesh N."/>
            <person name="Takeshita N."/>
            <person name="Ussery D."/>
            <person name="vanKuyk P.A."/>
            <person name="Visser H."/>
            <person name="van de Vondervoort P.J."/>
            <person name="de Vries R.P."/>
            <person name="Walton J."/>
            <person name="Xiang X."/>
            <person name="Xiong Y."/>
            <person name="Zeng A.P."/>
            <person name="Brandt B.W."/>
            <person name="Cornell M.J."/>
            <person name="van den Hondel C.A."/>
            <person name="Visser J."/>
            <person name="Oliver S.G."/>
            <person name="Turner G."/>
        </authorList>
    </citation>
    <scope>GENOME REANNOTATION</scope>
    <source>
        <strain>FGSC A4 / ATCC 38163 / CBS 112.46 / NRRL 194 / M139</strain>
    </source>
</reference>
<reference key="3">
    <citation type="journal article" date="2015" name="Fungal Genet. Biol.">
        <title>The old 3-oxoadipate pathway revisited: new insights in the catabolism of aromatics in the saprophytic fungus Aspergillus nidulans.</title>
        <authorList>
            <person name="Martins T.M."/>
            <person name="Hartmann D.O."/>
            <person name="Planchon S."/>
            <person name="Martins I."/>
            <person name="Renaut J."/>
            <person name="Silva Pereira C."/>
        </authorList>
    </citation>
    <scope>FUNCTION</scope>
    <scope>INDUCTION</scope>
</reference>
<accession>C8VBV0</accession>
<organism>
    <name type="scientific">Emericella nidulans (strain FGSC A4 / ATCC 38163 / CBS 112.46 / NRRL 194 / M139)</name>
    <name type="common">Aspergillus nidulans</name>
    <dbReference type="NCBI Taxonomy" id="227321"/>
    <lineage>
        <taxon>Eukaryota</taxon>
        <taxon>Fungi</taxon>
        <taxon>Dikarya</taxon>
        <taxon>Ascomycota</taxon>
        <taxon>Pezizomycotina</taxon>
        <taxon>Eurotiomycetes</taxon>
        <taxon>Eurotiomycetidae</taxon>
        <taxon>Eurotiales</taxon>
        <taxon>Aspergillaceae</taxon>
        <taxon>Aspergillus</taxon>
        <taxon>Aspergillus subgen. Nidulantes</taxon>
    </lineage>
</organism>
<protein>
    <recommendedName>
        <fullName evidence="6">p-hydroxybenzoate-m-hydroxylase</fullName>
        <ecNumber evidence="8">1.14.13.33</ecNumber>
    </recommendedName>
    <alternativeName>
        <fullName evidence="6">4-hydroxybenzoate-3-monooxygenase phhA</fullName>
    </alternativeName>
    <alternativeName>
        <fullName evidence="7">FAD-dependent monooxygenase phhA</fullName>
    </alternativeName>
</protein>
<sequence length="636" mass="71277">MTTDSYPKKYDIVIVGAGPVGILLSLCMSRWGYKVKHIDNRPVPTATGRADGIQPRSTEILRNLGLKRKIMAYDPAKVYDVSFWDPRPDGSGIMRTGNWPSCPRFIDTRYPFTTLVHQGKIETVFLDEIKKAGTTVERPWTIIGFKNDGLDATYPVQVQLKCLDTNVVETVRAKYLFSGEGARSFVREQLGIQIRHKDPISYVWGVMDGVVRTDFPDIQTKCTIHSDAGSIMVIPREDDMVRLYVQIASSSDPDFNPRKTATAEEVQNVAKKILKPYYIEWDRVEWYSVYPIGQGISEKYTLDERVFMGGDACHTHSPKAGQGMNTAFHDALNMAWKLHAVESGLAQRSILSTYETERKNIAETLLDFDNKYAALFSKRRPNAGEVGEAATAETGRSAEEDPFVKTFKDSCEFTSGYGVAYLPNIFNWDPSHPAKSPLFDVPGINLVTGKAFTPSTVTRLADSNFVHLEQEIPANGAFRIFIFAGRQSRSKKAIADFAANLEKERSFLSAYRRSDIGEISFFERHNPHSKLFTLCLIYAEKKNDIDMDSIPQILRDYRYHIYSDDIPDVRVPNATYAAHEKLGFDPEKGGVVVTRPDSHIACTVQLAEGSGTVDALNAYFGSFSTKPLGQEQASRL</sequence>
<feature type="chain" id="PRO_0000453617" description="p-hydroxybenzoate-m-hydroxylase">
    <location>
        <begin position="1"/>
        <end position="636"/>
    </location>
</feature>
<feature type="transmembrane region" description="Helical" evidence="3">
    <location>
        <begin position="12"/>
        <end position="33"/>
    </location>
</feature>
<feature type="binding site" evidence="2">
    <location>
        <begin position="11"/>
        <end position="40"/>
    </location>
    <ligand>
        <name>FAD</name>
        <dbReference type="ChEBI" id="CHEBI:57692"/>
    </ligand>
</feature>
<feature type="binding site" evidence="2">
    <location>
        <begin position="242"/>
        <end position="244"/>
    </location>
    <ligand>
        <name>FAD</name>
        <dbReference type="ChEBI" id="CHEBI:57692"/>
    </ligand>
</feature>
<feature type="binding site" evidence="2">
    <location>
        <position position="290"/>
    </location>
    <ligand>
        <name>FAD</name>
        <dbReference type="ChEBI" id="CHEBI:57692"/>
    </ligand>
</feature>
<feature type="binding site" evidence="2">
    <location>
        <position position="311"/>
    </location>
    <ligand>
        <name>FAD</name>
        <dbReference type="ChEBI" id="CHEBI:57692"/>
    </ligand>
</feature>
<feature type="glycosylation site" description="N-linked (GlcNAc...) asparagine" evidence="4">
    <location>
        <position position="573"/>
    </location>
</feature>
<dbReference type="EC" id="1.14.13.33" evidence="8"/>
<dbReference type="EMBL" id="BN001304">
    <property type="protein sequence ID" value="CBF79728.1"/>
    <property type="molecule type" value="Genomic_DNA"/>
</dbReference>
<dbReference type="RefSeq" id="XP_050467995.1">
    <property type="nucleotide sequence ID" value="XM_050612034.1"/>
</dbReference>
<dbReference type="SMR" id="C8VBV0"/>
<dbReference type="STRING" id="227321.C8VBV0"/>
<dbReference type="EnsemblFungi" id="CBF79728">
    <property type="protein sequence ID" value="CBF79728"/>
    <property type="gene ID" value="ANIA_10952"/>
</dbReference>
<dbReference type="GeneID" id="74896695"/>
<dbReference type="eggNOG" id="KOG3855">
    <property type="taxonomic scope" value="Eukaryota"/>
</dbReference>
<dbReference type="HOGENOM" id="CLU_009665_9_3_1"/>
<dbReference type="InParanoid" id="C8VBV0"/>
<dbReference type="OMA" id="IMAYEPA"/>
<dbReference type="OrthoDB" id="1716816at2759"/>
<dbReference type="Proteomes" id="UP000000560">
    <property type="component" value="Chromosome IV"/>
</dbReference>
<dbReference type="GO" id="GO:0016020">
    <property type="term" value="C:membrane"/>
    <property type="evidence" value="ECO:0007669"/>
    <property type="project" value="UniProtKB-SubCell"/>
</dbReference>
<dbReference type="GO" id="GO:0071949">
    <property type="term" value="F:FAD binding"/>
    <property type="evidence" value="ECO:0007669"/>
    <property type="project" value="InterPro"/>
</dbReference>
<dbReference type="GO" id="GO:0016491">
    <property type="term" value="F:oxidoreductase activity"/>
    <property type="evidence" value="ECO:0000318"/>
    <property type="project" value="GO_Central"/>
</dbReference>
<dbReference type="GO" id="GO:0016709">
    <property type="term" value="F:oxidoreductase activity, acting on paired donors, with incorporation or reduction of molecular oxygen, NAD(P)H as one donor, and incorporation of one atom of oxygen"/>
    <property type="evidence" value="ECO:0007669"/>
    <property type="project" value="UniProtKB-ARBA"/>
</dbReference>
<dbReference type="GO" id="GO:0009058">
    <property type="term" value="P:biosynthetic process"/>
    <property type="evidence" value="ECO:0007669"/>
    <property type="project" value="UniProtKB-ARBA"/>
</dbReference>
<dbReference type="CDD" id="cd02979">
    <property type="entry name" value="PHOX_C"/>
    <property type="match status" value="1"/>
</dbReference>
<dbReference type="Gene3D" id="3.40.30.20">
    <property type="match status" value="1"/>
</dbReference>
<dbReference type="Gene3D" id="3.30.9.10">
    <property type="entry name" value="D-Amino Acid Oxidase, subunit A, domain 2"/>
    <property type="match status" value="1"/>
</dbReference>
<dbReference type="Gene3D" id="3.50.50.60">
    <property type="entry name" value="FAD/NAD(P)-binding domain"/>
    <property type="match status" value="1"/>
</dbReference>
<dbReference type="InterPro" id="IPR002938">
    <property type="entry name" value="FAD-bd"/>
</dbReference>
<dbReference type="InterPro" id="IPR036188">
    <property type="entry name" value="FAD/NAD-bd_sf"/>
</dbReference>
<dbReference type="InterPro" id="IPR012941">
    <property type="entry name" value="Phe_hydrox_C_dim_dom"/>
</dbReference>
<dbReference type="InterPro" id="IPR038220">
    <property type="entry name" value="PHOX_C_sf"/>
</dbReference>
<dbReference type="InterPro" id="IPR050641">
    <property type="entry name" value="RIFMO-like"/>
</dbReference>
<dbReference type="InterPro" id="IPR036249">
    <property type="entry name" value="Thioredoxin-like_sf"/>
</dbReference>
<dbReference type="PANTHER" id="PTHR43004:SF7">
    <property type="entry name" value="P-HYDROXYBENZOATE-M-HYDROXYLASE"/>
    <property type="match status" value="1"/>
</dbReference>
<dbReference type="PANTHER" id="PTHR43004">
    <property type="entry name" value="TRK SYSTEM POTASSIUM UPTAKE PROTEIN"/>
    <property type="match status" value="1"/>
</dbReference>
<dbReference type="Pfam" id="PF01494">
    <property type="entry name" value="FAD_binding_3"/>
    <property type="match status" value="1"/>
</dbReference>
<dbReference type="Pfam" id="PF07976">
    <property type="entry name" value="Phe_hydrox_dim"/>
    <property type="match status" value="1"/>
</dbReference>
<dbReference type="PRINTS" id="PR00420">
    <property type="entry name" value="RNGMNOXGNASE"/>
</dbReference>
<dbReference type="SUPFAM" id="SSF54373">
    <property type="entry name" value="FAD-linked reductases, C-terminal domain"/>
    <property type="match status" value="1"/>
</dbReference>
<dbReference type="SUPFAM" id="SSF51905">
    <property type="entry name" value="FAD/NAD(P)-binding domain"/>
    <property type="match status" value="1"/>
</dbReference>
<dbReference type="SUPFAM" id="SSF52833">
    <property type="entry name" value="Thioredoxin-like"/>
    <property type="match status" value="1"/>
</dbReference>
<evidence type="ECO:0000250" key="1">
    <source>
        <dbReference type="UniProtKB" id="A2QTW5"/>
    </source>
</evidence>
<evidence type="ECO:0000250" key="2">
    <source>
        <dbReference type="UniProtKB" id="Q6SSJ6"/>
    </source>
</evidence>
<evidence type="ECO:0000255" key="3"/>
<evidence type="ECO:0000255" key="4">
    <source>
        <dbReference type="PROSITE-ProRule" id="PRU00498"/>
    </source>
</evidence>
<evidence type="ECO:0000269" key="5">
    <source>
    </source>
</evidence>
<evidence type="ECO:0000303" key="6">
    <source>
    </source>
</evidence>
<evidence type="ECO:0000305" key="7"/>
<evidence type="ECO:0000305" key="8">
    <source>
    </source>
</evidence>
<gene>
    <name type="ORF">ANIA_10952</name>
</gene>
<proteinExistence type="evidence at transcript level"/>